<protein>
    <recommendedName>
        <fullName evidence="1">ATP synthase subunit a 2</fullName>
    </recommendedName>
    <alternativeName>
        <fullName evidence="1">ATP synthase F0 sector subunit a 2</fullName>
    </alternativeName>
    <alternativeName>
        <fullName evidence="1">F-ATPase subunit 6 2</fullName>
    </alternativeName>
</protein>
<sequence length="255" mass="29133">MDNVSSAHEYIEHHLTFLTLGKGFWSINIDSMIMVWMVGLLFIGVFRYVAIRGTKGVPGRLQCFIEITFDFVNNLVKEIFKTEDKLIGPLALTIFVWVFLMNSIDLLPVDFVPALTRLFGVEHFRDLPSADVNVPVSMALGVFILIIGYTLKNKGIVGFIKELTTQPFEHPLLYPVNFLLELITLISKPISLGLRLFGNMYAGEMIFILIALMPWWMQWALSVPWALFHILIVFLQAFIFMVLTIVYLAMATEEH</sequence>
<accession>Q6LL02</accession>
<comment type="function">
    <text evidence="1">Key component of the proton channel; it plays a direct role in the translocation of protons across the membrane.</text>
</comment>
<comment type="subunit">
    <text evidence="1">F-type ATPases have 2 components, CF(1) - the catalytic core - and CF(0) - the membrane proton channel. CF(1) has five subunits: alpha(3), beta(3), gamma(1), delta(1), epsilon(1). CF(0) has three main subunits: a(1), b(2) and c(9-12). The alpha and beta chains form an alternating ring which encloses part of the gamma chain. CF(1) is attached to CF(0) by a central stalk formed by the gamma and epsilon chains, while a peripheral stalk is formed by the delta and b chains.</text>
</comment>
<comment type="subcellular location">
    <subcellularLocation>
        <location evidence="1">Cell inner membrane</location>
        <topology evidence="1">Multi-pass membrane protein</topology>
    </subcellularLocation>
</comment>
<comment type="similarity">
    <text evidence="1">Belongs to the ATPase A chain family.</text>
</comment>
<evidence type="ECO:0000255" key="1">
    <source>
        <dbReference type="HAMAP-Rule" id="MF_01393"/>
    </source>
</evidence>
<gene>
    <name evidence="1" type="primary">atpB2</name>
    <name type="ordered locus">PBPRB0130</name>
</gene>
<organism>
    <name type="scientific">Photobacterium profundum (strain SS9)</name>
    <dbReference type="NCBI Taxonomy" id="298386"/>
    <lineage>
        <taxon>Bacteria</taxon>
        <taxon>Pseudomonadati</taxon>
        <taxon>Pseudomonadota</taxon>
        <taxon>Gammaproteobacteria</taxon>
        <taxon>Vibrionales</taxon>
        <taxon>Vibrionaceae</taxon>
        <taxon>Photobacterium</taxon>
    </lineage>
</organism>
<dbReference type="EMBL" id="CR378675">
    <property type="protein sequence ID" value="CAG22003.1"/>
    <property type="molecule type" value="Genomic_DNA"/>
</dbReference>
<dbReference type="RefSeq" id="WP_011220228.1">
    <property type="nucleotide sequence ID" value="NC_006371.1"/>
</dbReference>
<dbReference type="SMR" id="Q6LL02"/>
<dbReference type="STRING" id="298386.PBPRB0130"/>
<dbReference type="KEGG" id="ppr:PBPRB0130"/>
<dbReference type="eggNOG" id="COG0356">
    <property type="taxonomic scope" value="Bacteria"/>
</dbReference>
<dbReference type="HOGENOM" id="CLU_041018_1_0_6"/>
<dbReference type="Proteomes" id="UP000000593">
    <property type="component" value="Chromosome 2"/>
</dbReference>
<dbReference type="GO" id="GO:0005886">
    <property type="term" value="C:plasma membrane"/>
    <property type="evidence" value="ECO:0007669"/>
    <property type="project" value="UniProtKB-SubCell"/>
</dbReference>
<dbReference type="GO" id="GO:0045259">
    <property type="term" value="C:proton-transporting ATP synthase complex"/>
    <property type="evidence" value="ECO:0007669"/>
    <property type="project" value="UniProtKB-KW"/>
</dbReference>
<dbReference type="GO" id="GO:0046933">
    <property type="term" value="F:proton-transporting ATP synthase activity, rotational mechanism"/>
    <property type="evidence" value="ECO:0007669"/>
    <property type="project" value="UniProtKB-UniRule"/>
</dbReference>
<dbReference type="GO" id="GO:0042777">
    <property type="term" value="P:proton motive force-driven plasma membrane ATP synthesis"/>
    <property type="evidence" value="ECO:0007669"/>
    <property type="project" value="TreeGrafter"/>
</dbReference>
<dbReference type="CDD" id="cd00310">
    <property type="entry name" value="ATP-synt_Fo_a_6"/>
    <property type="match status" value="1"/>
</dbReference>
<dbReference type="FunFam" id="1.20.120.220:FF:000002">
    <property type="entry name" value="ATP synthase subunit a"/>
    <property type="match status" value="1"/>
</dbReference>
<dbReference type="Gene3D" id="1.20.120.220">
    <property type="entry name" value="ATP synthase, F0 complex, subunit A"/>
    <property type="match status" value="1"/>
</dbReference>
<dbReference type="HAMAP" id="MF_01393">
    <property type="entry name" value="ATP_synth_a_bact"/>
    <property type="match status" value="1"/>
</dbReference>
<dbReference type="InterPro" id="IPR045082">
    <property type="entry name" value="ATP_syn_F0_a_bact/chloroplast"/>
</dbReference>
<dbReference type="InterPro" id="IPR000568">
    <property type="entry name" value="ATP_synth_F0_asu"/>
</dbReference>
<dbReference type="InterPro" id="IPR023011">
    <property type="entry name" value="ATP_synth_F0_asu_AS"/>
</dbReference>
<dbReference type="InterPro" id="IPR035908">
    <property type="entry name" value="F0_ATP_A_sf"/>
</dbReference>
<dbReference type="NCBIfam" id="TIGR01131">
    <property type="entry name" value="ATP_synt_6_or_A"/>
    <property type="match status" value="1"/>
</dbReference>
<dbReference type="NCBIfam" id="NF004477">
    <property type="entry name" value="PRK05815.1-1"/>
    <property type="match status" value="1"/>
</dbReference>
<dbReference type="PANTHER" id="PTHR42823">
    <property type="entry name" value="ATP SYNTHASE SUBUNIT A, CHLOROPLASTIC"/>
    <property type="match status" value="1"/>
</dbReference>
<dbReference type="PANTHER" id="PTHR42823:SF3">
    <property type="entry name" value="ATP SYNTHASE SUBUNIT A, CHLOROPLASTIC"/>
    <property type="match status" value="1"/>
</dbReference>
<dbReference type="Pfam" id="PF00119">
    <property type="entry name" value="ATP-synt_A"/>
    <property type="match status" value="1"/>
</dbReference>
<dbReference type="PRINTS" id="PR00123">
    <property type="entry name" value="ATPASEA"/>
</dbReference>
<dbReference type="SUPFAM" id="SSF81336">
    <property type="entry name" value="F1F0 ATP synthase subunit A"/>
    <property type="match status" value="1"/>
</dbReference>
<dbReference type="PROSITE" id="PS00449">
    <property type="entry name" value="ATPASE_A"/>
    <property type="match status" value="1"/>
</dbReference>
<reference key="1">
    <citation type="journal article" date="2005" name="Science">
        <title>Life at depth: Photobacterium profundum genome sequence and expression analysis.</title>
        <authorList>
            <person name="Vezzi A."/>
            <person name="Campanaro S."/>
            <person name="D'Angelo M."/>
            <person name="Simonato F."/>
            <person name="Vitulo N."/>
            <person name="Lauro F.M."/>
            <person name="Cestaro A."/>
            <person name="Malacrida G."/>
            <person name="Simionati B."/>
            <person name="Cannata N."/>
            <person name="Romualdi C."/>
            <person name="Bartlett D.H."/>
            <person name="Valle G."/>
        </authorList>
    </citation>
    <scope>NUCLEOTIDE SEQUENCE [LARGE SCALE GENOMIC DNA]</scope>
    <source>
        <strain>ATCC BAA-1253 / SS9</strain>
    </source>
</reference>
<name>ATP62_PHOPR</name>
<keyword id="KW-0066">ATP synthesis</keyword>
<keyword id="KW-0997">Cell inner membrane</keyword>
<keyword id="KW-1003">Cell membrane</keyword>
<keyword id="KW-0138">CF(0)</keyword>
<keyword id="KW-0375">Hydrogen ion transport</keyword>
<keyword id="KW-0406">Ion transport</keyword>
<keyword id="KW-0472">Membrane</keyword>
<keyword id="KW-1185">Reference proteome</keyword>
<keyword id="KW-0812">Transmembrane</keyword>
<keyword id="KW-1133">Transmembrane helix</keyword>
<keyword id="KW-0813">Transport</keyword>
<feature type="chain" id="PRO_0000362372" description="ATP synthase subunit a 2">
    <location>
        <begin position="1"/>
        <end position="255"/>
    </location>
</feature>
<feature type="transmembrane region" description="Helical" evidence="1">
    <location>
        <begin position="26"/>
        <end position="46"/>
    </location>
</feature>
<feature type="transmembrane region" description="Helical" evidence="1">
    <location>
        <begin position="86"/>
        <end position="106"/>
    </location>
</feature>
<feature type="transmembrane region" description="Helical" evidence="1">
    <location>
        <begin position="131"/>
        <end position="151"/>
    </location>
</feature>
<feature type="transmembrane region" description="Helical" evidence="1">
    <location>
        <begin position="205"/>
        <end position="225"/>
    </location>
</feature>
<feature type="transmembrane region" description="Helical" evidence="1">
    <location>
        <begin position="230"/>
        <end position="250"/>
    </location>
</feature>
<proteinExistence type="inferred from homology"/>